<feature type="signal peptide" evidence="1">
    <location>
        <begin position="1"/>
        <end position="22"/>
    </location>
</feature>
<feature type="chain" id="PRO_1000131540" description="Tol-Pal system protein TolB" evidence="1">
    <location>
        <begin position="23"/>
        <end position="439"/>
    </location>
</feature>
<reference key="1">
    <citation type="journal article" date="2008" name="J. Biotechnol.">
        <title>The genome of Xanthomonas campestris pv. campestris B100 and its use for the reconstruction of metabolic pathways involved in xanthan biosynthesis.</title>
        <authorList>
            <person name="Vorhoelter F.-J."/>
            <person name="Schneiker S."/>
            <person name="Goesmann A."/>
            <person name="Krause L."/>
            <person name="Bekel T."/>
            <person name="Kaiser O."/>
            <person name="Linke B."/>
            <person name="Patschkowski T."/>
            <person name="Rueckert C."/>
            <person name="Schmid J."/>
            <person name="Sidhu V.K."/>
            <person name="Sieber V."/>
            <person name="Tauch A."/>
            <person name="Watt S.A."/>
            <person name="Weisshaar B."/>
            <person name="Becker A."/>
            <person name="Niehaus K."/>
            <person name="Puehler A."/>
        </authorList>
    </citation>
    <scope>NUCLEOTIDE SEQUENCE [LARGE SCALE GENOMIC DNA]</scope>
    <source>
        <strain>B100</strain>
    </source>
</reference>
<accession>B0RPZ2</accession>
<name>TOLB_XANCB</name>
<keyword id="KW-0131">Cell cycle</keyword>
<keyword id="KW-0132">Cell division</keyword>
<keyword id="KW-0574">Periplasm</keyword>
<keyword id="KW-0732">Signal</keyword>
<evidence type="ECO:0000255" key="1">
    <source>
        <dbReference type="HAMAP-Rule" id="MF_00671"/>
    </source>
</evidence>
<protein>
    <recommendedName>
        <fullName evidence="1">Tol-Pal system protein TolB</fullName>
    </recommendedName>
</protein>
<proteinExistence type="inferred from homology"/>
<gene>
    <name evidence="1" type="primary">tolB</name>
    <name type="ordered locus">xcc-b100_1179</name>
</gene>
<dbReference type="EMBL" id="AM920689">
    <property type="protein sequence ID" value="CAP50527.1"/>
    <property type="molecule type" value="Genomic_DNA"/>
</dbReference>
<dbReference type="SMR" id="B0RPZ2"/>
<dbReference type="KEGG" id="xca:xcc-b100_1179"/>
<dbReference type="HOGENOM" id="CLU_047123_0_0_6"/>
<dbReference type="Proteomes" id="UP000001188">
    <property type="component" value="Chromosome"/>
</dbReference>
<dbReference type="GO" id="GO:0042597">
    <property type="term" value="C:periplasmic space"/>
    <property type="evidence" value="ECO:0007669"/>
    <property type="project" value="UniProtKB-SubCell"/>
</dbReference>
<dbReference type="GO" id="GO:0051301">
    <property type="term" value="P:cell division"/>
    <property type="evidence" value="ECO:0007669"/>
    <property type="project" value="UniProtKB-UniRule"/>
</dbReference>
<dbReference type="GO" id="GO:0017038">
    <property type="term" value="P:protein import"/>
    <property type="evidence" value="ECO:0007669"/>
    <property type="project" value="InterPro"/>
</dbReference>
<dbReference type="Gene3D" id="2.120.10.30">
    <property type="entry name" value="TolB, C-terminal domain"/>
    <property type="match status" value="1"/>
</dbReference>
<dbReference type="Gene3D" id="3.40.50.10070">
    <property type="entry name" value="TolB, N-terminal domain"/>
    <property type="match status" value="1"/>
</dbReference>
<dbReference type="HAMAP" id="MF_00671">
    <property type="entry name" value="TolB"/>
    <property type="match status" value="1"/>
</dbReference>
<dbReference type="InterPro" id="IPR011042">
    <property type="entry name" value="6-blade_b-propeller_TolB-like"/>
</dbReference>
<dbReference type="InterPro" id="IPR011659">
    <property type="entry name" value="PD40"/>
</dbReference>
<dbReference type="InterPro" id="IPR014167">
    <property type="entry name" value="Tol-Pal_TolB"/>
</dbReference>
<dbReference type="InterPro" id="IPR007195">
    <property type="entry name" value="TolB_N"/>
</dbReference>
<dbReference type="NCBIfam" id="TIGR02800">
    <property type="entry name" value="propeller_TolB"/>
    <property type="match status" value="1"/>
</dbReference>
<dbReference type="PANTHER" id="PTHR36842:SF1">
    <property type="entry name" value="PROTEIN TOLB"/>
    <property type="match status" value="1"/>
</dbReference>
<dbReference type="PANTHER" id="PTHR36842">
    <property type="entry name" value="PROTEIN TOLB HOMOLOG"/>
    <property type="match status" value="1"/>
</dbReference>
<dbReference type="Pfam" id="PF07676">
    <property type="entry name" value="PD40"/>
    <property type="match status" value="3"/>
</dbReference>
<dbReference type="Pfam" id="PF04052">
    <property type="entry name" value="TolB_N"/>
    <property type="match status" value="1"/>
</dbReference>
<dbReference type="SUPFAM" id="SSF52964">
    <property type="entry name" value="TolB, N-terminal domain"/>
    <property type="match status" value="1"/>
</dbReference>
<dbReference type="SUPFAM" id="SSF69304">
    <property type="entry name" value="Tricorn protease N-terminal domain"/>
    <property type="match status" value="1"/>
</dbReference>
<comment type="function">
    <text evidence="1">Part of the Tol-Pal system, which plays a role in outer membrane invagination during cell division and is important for maintaining outer membrane integrity.</text>
</comment>
<comment type="subunit">
    <text evidence="1">The Tol-Pal system is composed of five core proteins: the inner membrane proteins TolA, TolQ and TolR, the periplasmic protein TolB and the outer membrane protein Pal. They form a network linking the inner and outer membranes and the peptidoglycan layer.</text>
</comment>
<comment type="subcellular location">
    <subcellularLocation>
        <location evidence="1">Periplasm</location>
    </subcellularLocation>
</comment>
<comment type="similarity">
    <text evidence="1">Belongs to the TolB family.</text>
</comment>
<sequence length="439" mass="47035">MKKPLRWLAALTALLLPLSAFAQQQGLTIDIVGGSASATPITVVPMPYQGSGTAPQTDVSAVVSADLDRSGQFRTLPAAQIVEKPTRGTEVQFQTWRTLKQNYIVVGRVMDAGEGAYRVEYELFDVAKGERLLGLAMTARANAMRDVSHQMADAIYEKVTGVRGAFWTRIAYVTASGSGGSMRYALMVADSDGYNPQTIVRSAEPLLSPNWSPDGKKLAYVSFERGNSSIYLQDIASGARELVSSFRGINGAPSFSPDGRRLALALSRSGNPEIYVMDLGSKQLTQLTNHFGIDTEPTWAPDGGSIYFTSDRGGRPQIYQVAASGGSANRVTFQGNYNATASVSFDGKKVAVAQGSGNTYRIAMMDRSLGSPSWSTLSPGSLDESPSFAPNASMVLYAAREGGRGVLYAVSADARVRQRLVLADGDVREPAWGPYRTAH</sequence>
<organism>
    <name type="scientific">Xanthomonas campestris pv. campestris (strain B100)</name>
    <dbReference type="NCBI Taxonomy" id="509169"/>
    <lineage>
        <taxon>Bacteria</taxon>
        <taxon>Pseudomonadati</taxon>
        <taxon>Pseudomonadota</taxon>
        <taxon>Gammaproteobacteria</taxon>
        <taxon>Lysobacterales</taxon>
        <taxon>Lysobacteraceae</taxon>
        <taxon>Xanthomonas</taxon>
    </lineage>
</organism>